<proteinExistence type="inferred from homology"/>
<sequence>MASLRDIKSRITSTKKTSQITKAMQMVSAAKLNRAETNAKSFAPYMDKIQEVVFNVGKGAKNAKHPMLVSREVKKTAYLVITSDRGLAGAFNSSVLRNAYRTIQERHQSKDEYTVIAIGRVGRDFFKKREMPILSELVGLGDEVTFAQIKDLTRQTVQMFIDGAFDELHLVYNHFVSAISQEVTEKKVLPLTDFGTSGGKRTASYEFEPDEEEVLEVLLPQYAESLIYGALLDSKASEHAARMTAMKNATDNAKELIDSLSLSYNRARQAAITQEITEIVGGAAALE</sequence>
<gene>
    <name evidence="1" type="primary">atpG</name>
    <name type="ordered locus">RBAM_033980</name>
</gene>
<accession>A7Z9Q1</accession>
<reference key="1">
    <citation type="journal article" date="2007" name="Nat. Biotechnol.">
        <title>Comparative analysis of the complete genome sequence of the plant growth-promoting bacterium Bacillus amyloliquefaciens FZB42.</title>
        <authorList>
            <person name="Chen X.H."/>
            <person name="Koumoutsi A."/>
            <person name="Scholz R."/>
            <person name="Eisenreich A."/>
            <person name="Schneider K."/>
            <person name="Heinemeyer I."/>
            <person name="Morgenstern B."/>
            <person name="Voss B."/>
            <person name="Hess W.R."/>
            <person name="Reva O."/>
            <person name="Junge H."/>
            <person name="Voigt B."/>
            <person name="Jungblut P.R."/>
            <person name="Vater J."/>
            <person name="Suessmuth R."/>
            <person name="Liesegang H."/>
            <person name="Strittmatter A."/>
            <person name="Gottschalk G."/>
            <person name="Borriss R."/>
        </authorList>
    </citation>
    <scope>NUCLEOTIDE SEQUENCE [LARGE SCALE GENOMIC DNA]</scope>
    <source>
        <strain>DSM 23117 / BGSC 10A6 / LMG 26770 / FZB42</strain>
    </source>
</reference>
<protein>
    <recommendedName>
        <fullName evidence="1">ATP synthase gamma chain</fullName>
    </recommendedName>
    <alternativeName>
        <fullName evidence="1">ATP synthase F1 sector gamma subunit</fullName>
    </alternativeName>
    <alternativeName>
        <fullName evidence="1">F-ATPase gamma subunit</fullName>
    </alternativeName>
</protein>
<evidence type="ECO:0000255" key="1">
    <source>
        <dbReference type="HAMAP-Rule" id="MF_00815"/>
    </source>
</evidence>
<dbReference type="EMBL" id="CP000560">
    <property type="protein sequence ID" value="ABS75727.1"/>
    <property type="molecule type" value="Genomic_DNA"/>
</dbReference>
<dbReference type="RefSeq" id="WP_003151172.1">
    <property type="nucleotide sequence ID" value="NC_009725.2"/>
</dbReference>
<dbReference type="SMR" id="A7Z9Q1"/>
<dbReference type="GeneID" id="93082542"/>
<dbReference type="KEGG" id="bay:RBAM_033980"/>
<dbReference type="HOGENOM" id="CLU_050669_0_1_9"/>
<dbReference type="Proteomes" id="UP000001120">
    <property type="component" value="Chromosome"/>
</dbReference>
<dbReference type="GO" id="GO:0005886">
    <property type="term" value="C:plasma membrane"/>
    <property type="evidence" value="ECO:0007669"/>
    <property type="project" value="UniProtKB-SubCell"/>
</dbReference>
<dbReference type="GO" id="GO:0045259">
    <property type="term" value="C:proton-transporting ATP synthase complex"/>
    <property type="evidence" value="ECO:0007669"/>
    <property type="project" value="UniProtKB-KW"/>
</dbReference>
<dbReference type="GO" id="GO:0005524">
    <property type="term" value="F:ATP binding"/>
    <property type="evidence" value="ECO:0007669"/>
    <property type="project" value="UniProtKB-UniRule"/>
</dbReference>
<dbReference type="GO" id="GO:0046933">
    <property type="term" value="F:proton-transporting ATP synthase activity, rotational mechanism"/>
    <property type="evidence" value="ECO:0007669"/>
    <property type="project" value="UniProtKB-UniRule"/>
</dbReference>
<dbReference type="GO" id="GO:0042777">
    <property type="term" value="P:proton motive force-driven plasma membrane ATP synthesis"/>
    <property type="evidence" value="ECO:0007669"/>
    <property type="project" value="UniProtKB-UniRule"/>
</dbReference>
<dbReference type="CDD" id="cd12151">
    <property type="entry name" value="F1-ATPase_gamma"/>
    <property type="match status" value="1"/>
</dbReference>
<dbReference type="FunFam" id="1.10.287.80:FF:000010">
    <property type="entry name" value="ATP synthase gamma chain"/>
    <property type="match status" value="1"/>
</dbReference>
<dbReference type="FunFam" id="3.40.1380.10:FF:000002">
    <property type="entry name" value="ATP synthase gamma chain"/>
    <property type="match status" value="1"/>
</dbReference>
<dbReference type="Gene3D" id="3.40.1380.10">
    <property type="match status" value="1"/>
</dbReference>
<dbReference type="Gene3D" id="1.10.287.80">
    <property type="entry name" value="ATP synthase, gamma subunit, helix hairpin domain"/>
    <property type="match status" value="1"/>
</dbReference>
<dbReference type="HAMAP" id="MF_00815">
    <property type="entry name" value="ATP_synth_gamma_bact"/>
    <property type="match status" value="1"/>
</dbReference>
<dbReference type="InterPro" id="IPR035968">
    <property type="entry name" value="ATP_synth_F1_ATPase_gsu"/>
</dbReference>
<dbReference type="InterPro" id="IPR000131">
    <property type="entry name" value="ATP_synth_F1_gsu"/>
</dbReference>
<dbReference type="InterPro" id="IPR023632">
    <property type="entry name" value="ATP_synth_F1_gsu_CS"/>
</dbReference>
<dbReference type="NCBIfam" id="TIGR01146">
    <property type="entry name" value="ATPsyn_F1gamma"/>
    <property type="match status" value="1"/>
</dbReference>
<dbReference type="PANTHER" id="PTHR11693">
    <property type="entry name" value="ATP SYNTHASE GAMMA CHAIN"/>
    <property type="match status" value="1"/>
</dbReference>
<dbReference type="PANTHER" id="PTHR11693:SF22">
    <property type="entry name" value="ATP SYNTHASE SUBUNIT GAMMA, MITOCHONDRIAL"/>
    <property type="match status" value="1"/>
</dbReference>
<dbReference type="Pfam" id="PF00231">
    <property type="entry name" value="ATP-synt"/>
    <property type="match status" value="1"/>
</dbReference>
<dbReference type="PRINTS" id="PR00126">
    <property type="entry name" value="ATPASEGAMMA"/>
</dbReference>
<dbReference type="SUPFAM" id="SSF52943">
    <property type="entry name" value="ATP synthase (F1-ATPase), gamma subunit"/>
    <property type="match status" value="1"/>
</dbReference>
<dbReference type="PROSITE" id="PS00153">
    <property type="entry name" value="ATPASE_GAMMA"/>
    <property type="match status" value="1"/>
</dbReference>
<organism>
    <name type="scientific">Bacillus velezensis (strain DSM 23117 / BGSC 10A6 / LMG 26770 / FZB42)</name>
    <name type="common">Bacillus amyloliquefaciens subsp. plantarum</name>
    <dbReference type="NCBI Taxonomy" id="326423"/>
    <lineage>
        <taxon>Bacteria</taxon>
        <taxon>Bacillati</taxon>
        <taxon>Bacillota</taxon>
        <taxon>Bacilli</taxon>
        <taxon>Bacillales</taxon>
        <taxon>Bacillaceae</taxon>
        <taxon>Bacillus</taxon>
        <taxon>Bacillus amyloliquefaciens group</taxon>
    </lineage>
</organism>
<keyword id="KW-0066">ATP synthesis</keyword>
<keyword id="KW-1003">Cell membrane</keyword>
<keyword id="KW-0139">CF(1)</keyword>
<keyword id="KW-0375">Hydrogen ion transport</keyword>
<keyword id="KW-0406">Ion transport</keyword>
<keyword id="KW-0472">Membrane</keyword>
<keyword id="KW-0813">Transport</keyword>
<feature type="chain" id="PRO_1000053157" description="ATP synthase gamma chain">
    <location>
        <begin position="1"/>
        <end position="287"/>
    </location>
</feature>
<comment type="function">
    <text evidence="1">Produces ATP from ADP in the presence of a proton gradient across the membrane. The gamma chain is believed to be important in regulating ATPase activity and the flow of protons through the CF(0) complex.</text>
</comment>
<comment type="subunit">
    <text evidence="1">F-type ATPases have 2 components, CF(1) - the catalytic core - and CF(0) - the membrane proton channel. CF(1) has five subunits: alpha(3), beta(3), gamma(1), delta(1), epsilon(1). CF(0) has three main subunits: a, b and c.</text>
</comment>
<comment type="subcellular location">
    <subcellularLocation>
        <location evidence="1">Cell membrane</location>
        <topology evidence="1">Peripheral membrane protein</topology>
    </subcellularLocation>
</comment>
<comment type="similarity">
    <text evidence="1">Belongs to the ATPase gamma chain family.</text>
</comment>
<name>ATPG_BACVZ</name>